<dbReference type="EMBL" id="DQ091202">
    <property type="protein sequence ID" value="AAZ22675.1"/>
    <property type="molecule type" value="Genomic_DNA"/>
</dbReference>
<dbReference type="SMR" id="Q45XI9"/>
<dbReference type="GO" id="GO:0072562">
    <property type="term" value="C:blood microparticle"/>
    <property type="evidence" value="ECO:0007669"/>
    <property type="project" value="TreeGrafter"/>
</dbReference>
<dbReference type="GO" id="GO:0031838">
    <property type="term" value="C:haptoglobin-hemoglobin complex"/>
    <property type="evidence" value="ECO:0007669"/>
    <property type="project" value="TreeGrafter"/>
</dbReference>
<dbReference type="GO" id="GO:0005833">
    <property type="term" value="C:hemoglobin complex"/>
    <property type="evidence" value="ECO:0007669"/>
    <property type="project" value="InterPro"/>
</dbReference>
<dbReference type="GO" id="GO:0031720">
    <property type="term" value="F:haptoglobin binding"/>
    <property type="evidence" value="ECO:0007669"/>
    <property type="project" value="TreeGrafter"/>
</dbReference>
<dbReference type="GO" id="GO:0020037">
    <property type="term" value="F:heme binding"/>
    <property type="evidence" value="ECO:0007669"/>
    <property type="project" value="InterPro"/>
</dbReference>
<dbReference type="GO" id="GO:0031721">
    <property type="term" value="F:hemoglobin alpha binding"/>
    <property type="evidence" value="ECO:0007669"/>
    <property type="project" value="TreeGrafter"/>
</dbReference>
<dbReference type="GO" id="GO:0046872">
    <property type="term" value="F:metal ion binding"/>
    <property type="evidence" value="ECO:0007669"/>
    <property type="project" value="UniProtKB-KW"/>
</dbReference>
<dbReference type="GO" id="GO:0043177">
    <property type="term" value="F:organic acid binding"/>
    <property type="evidence" value="ECO:0007669"/>
    <property type="project" value="TreeGrafter"/>
</dbReference>
<dbReference type="GO" id="GO:0019825">
    <property type="term" value="F:oxygen binding"/>
    <property type="evidence" value="ECO:0007669"/>
    <property type="project" value="InterPro"/>
</dbReference>
<dbReference type="GO" id="GO:0005344">
    <property type="term" value="F:oxygen carrier activity"/>
    <property type="evidence" value="ECO:0007669"/>
    <property type="project" value="UniProtKB-KW"/>
</dbReference>
<dbReference type="GO" id="GO:0004601">
    <property type="term" value="F:peroxidase activity"/>
    <property type="evidence" value="ECO:0007669"/>
    <property type="project" value="TreeGrafter"/>
</dbReference>
<dbReference type="GO" id="GO:0042744">
    <property type="term" value="P:hydrogen peroxide catabolic process"/>
    <property type="evidence" value="ECO:0007669"/>
    <property type="project" value="TreeGrafter"/>
</dbReference>
<dbReference type="CDD" id="cd08925">
    <property type="entry name" value="Hb-beta-like"/>
    <property type="match status" value="1"/>
</dbReference>
<dbReference type="FunFam" id="1.10.490.10:FF:000001">
    <property type="entry name" value="Hemoglobin subunit beta"/>
    <property type="match status" value="1"/>
</dbReference>
<dbReference type="Gene3D" id="1.10.490.10">
    <property type="entry name" value="Globins"/>
    <property type="match status" value="1"/>
</dbReference>
<dbReference type="InterPro" id="IPR000971">
    <property type="entry name" value="Globin"/>
</dbReference>
<dbReference type="InterPro" id="IPR009050">
    <property type="entry name" value="Globin-like_sf"/>
</dbReference>
<dbReference type="InterPro" id="IPR012292">
    <property type="entry name" value="Globin/Proto"/>
</dbReference>
<dbReference type="InterPro" id="IPR002337">
    <property type="entry name" value="Hemoglobin_b"/>
</dbReference>
<dbReference type="InterPro" id="IPR050056">
    <property type="entry name" value="Hemoglobin_oxygen_transport"/>
</dbReference>
<dbReference type="PANTHER" id="PTHR11442">
    <property type="entry name" value="HEMOGLOBIN FAMILY MEMBER"/>
    <property type="match status" value="1"/>
</dbReference>
<dbReference type="PANTHER" id="PTHR11442:SF42">
    <property type="entry name" value="HEMOGLOBIN SUBUNIT BETA"/>
    <property type="match status" value="1"/>
</dbReference>
<dbReference type="Pfam" id="PF00042">
    <property type="entry name" value="Globin"/>
    <property type="match status" value="1"/>
</dbReference>
<dbReference type="PRINTS" id="PR00814">
    <property type="entry name" value="BETAHAEM"/>
</dbReference>
<dbReference type="SUPFAM" id="SSF46458">
    <property type="entry name" value="Globin-like"/>
    <property type="match status" value="1"/>
</dbReference>
<dbReference type="PROSITE" id="PS01033">
    <property type="entry name" value="GLOBIN"/>
    <property type="match status" value="1"/>
</dbReference>
<name>HBD_ELEMA</name>
<protein>
    <recommendedName>
        <fullName>Hemoglobin subunit delta</fullName>
    </recommendedName>
    <alternativeName>
        <fullName>Delta-globin</fullName>
    </alternativeName>
    <alternativeName>
        <fullName>Hemoglobin delta chain</fullName>
    </alternativeName>
</protein>
<reference key="1">
    <citation type="submission" date="2005-06" db="EMBL/GenBank/DDBJ databases">
        <title>Atypical molecular evolution of afrotherian and xenarthran beta-globin cluster genes.</title>
        <authorList>
            <person name="Sloan A.M."/>
            <person name="Campbell K.L."/>
        </authorList>
    </citation>
    <scope>NUCLEOTIDE SEQUENCE [GENOMIC DNA]</scope>
</reference>
<organism>
    <name type="scientific">Elephas maximus</name>
    <name type="common">Indian elephant</name>
    <dbReference type="NCBI Taxonomy" id="9783"/>
    <lineage>
        <taxon>Eukaryota</taxon>
        <taxon>Metazoa</taxon>
        <taxon>Chordata</taxon>
        <taxon>Craniata</taxon>
        <taxon>Vertebrata</taxon>
        <taxon>Euteleostomi</taxon>
        <taxon>Mammalia</taxon>
        <taxon>Eutheria</taxon>
        <taxon>Afrotheria</taxon>
        <taxon>Proboscidea</taxon>
        <taxon>Elephantidae</taxon>
        <taxon>Elephas</taxon>
    </lineage>
</organism>
<evidence type="ECO:0000255" key="1">
    <source>
        <dbReference type="PROSITE-ProRule" id="PRU00238"/>
    </source>
</evidence>
<sequence length="147" mass="16300">MVNLTAAEKTQVTNLWGKVNVKELGGEALSRLLVVYPWTRRFFEHFGDLSTADAVLHNAKVLAHGEKVLTSFGEGLKHLDNLKGTFADLSELHCDKLHVDPENFRLLGNVLVIVLARHFGKEFTPDVQAAYEKVVAGVANALAHKYH</sequence>
<feature type="chain" id="PRO_0000053177" description="Hemoglobin subunit delta">
    <location>
        <begin position="1"/>
        <end position="147"/>
    </location>
</feature>
<feature type="domain" description="Globin" evidence="1">
    <location>
        <begin position="3"/>
        <end position="147"/>
    </location>
</feature>
<feature type="binding site" description="distal binding residue">
    <location>
        <position position="64"/>
    </location>
    <ligand>
        <name>heme b</name>
        <dbReference type="ChEBI" id="CHEBI:60344"/>
    </ligand>
    <ligandPart>
        <name>Fe</name>
        <dbReference type="ChEBI" id="CHEBI:18248"/>
    </ligandPart>
</feature>
<feature type="binding site" description="proximal binding residue">
    <location>
        <position position="93"/>
    </location>
    <ligand>
        <name>heme b</name>
        <dbReference type="ChEBI" id="CHEBI:60344"/>
    </ligand>
    <ligandPart>
        <name>Fe</name>
        <dbReference type="ChEBI" id="CHEBI:18248"/>
    </ligandPart>
</feature>
<comment type="subunit">
    <text>Heterotetramer of two delta chains and two alpha chains.</text>
</comment>
<comment type="tissue specificity">
    <text>Red blood cells.</text>
</comment>
<comment type="similarity">
    <text evidence="1">Belongs to the globin family.</text>
</comment>
<keyword id="KW-0349">Heme</keyword>
<keyword id="KW-0408">Iron</keyword>
<keyword id="KW-0479">Metal-binding</keyword>
<keyword id="KW-0561">Oxygen transport</keyword>
<keyword id="KW-0813">Transport</keyword>
<accession>Q45XI9</accession>
<gene>
    <name type="primary">HBD</name>
</gene>
<proteinExistence type="evidence at transcript level"/>